<accession>P47106</accession>
<name>YJ08_YEAST</name>
<gene>
    <name type="ordered locus">YJR038C</name>
    <name type="ORF">J1612</name>
</gene>
<feature type="chain" id="PRO_0000203092" description="Putative uncharacterized protein YJR038C">
    <location>
        <begin position="1"/>
        <end position="120"/>
    </location>
</feature>
<feature type="transmembrane region" description="Helical" evidence="1">
    <location>
        <begin position="26"/>
        <end position="46"/>
    </location>
</feature>
<feature type="transmembrane region" description="Helical" evidence="1">
    <location>
        <begin position="57"/>
        <end position="77"/>
    </location>
</feature>
<evidence type="ECO:0000255" key="1"/>
<evidence type="ECO:0000305" key="2"/>
<evidence type="ECO:0000305" key="3">
    <source>
    </source>
</evidence>
<comment type="subcellular location">
    <subcellularLocation>
        <location evidence="2">Membrane</location>
        <topology evidence="2">Multi-pass membrane protein</topology>
    </subcellularLocation>
</comment>
<comment type="caution">
    <text evidence="3">Product of a dubious gene prediction unlikely to encode a functional protein. Because of that it is not part of the S.cerevisiae S288c complete/reference proteome set.</text>
</comment>
<dbReference type="EMBL" id="L36344">
    <property type="protein sequence ID" value="AAA88740.1"/>
    <property type="molecule type" value="Genomic_DNA"/>
</dbReference>
<dbReference type="EMBL" id="Z49538">
    <property type="protein sequence ID" value="CAA89565.1"/>
    <property type="molecule type" value="Genomic_DNA"/>
</dbReference>
<dbReference type="PIR" id="S57057">
    <property type="entry name" value="S57057"/>
</dbReference>
<dbReference type="DIP" id="DIP-4416N"/>
<dbReference type="IntAct" id="P47106">
    <property type="interactions" value="2"/>
</dbReference>
<dbReference type="STRING" id="4932.YJR038C"/>
<dbReference type="PaxDb" id="4932-YJR038C"/>
<dbReference type="EnsemblFungi" id="YJR038C_mRNA">
    <property type="protein sequence ID" value="YJR038C"/>
    <property type="gene ID" value="YJR038C"/>
</dbReference>
<dbReference type="AGR" id="SGD:S000003799"/>
<dbReference type="SGD" id="S000003799">
    <property type="gene designation" value="YJR038C"/>
</dbReference>
<dbReference type="HOGENOM" id="CLU_2051479_0_0_1"/>
<dbReference type="GO" id="GO:0016020">
    <property type="term" value="C:membrane"/>
    <property type="evidence" value="ECO:0007669"/>
    <property type="project" value="UniProtKB-SubCell"/>
</dbReference>
<sequence>MTTNSRLCPSSPSSSLIKHLTTSGGPSTSLTIMLSVIAIRILPAGMRNWIRQALGSLLFASFLLLSSFHYPITLTLVPVYHESLVKPTSASFGGIRLSQLTMIMERRATPTCQDPSLTEV</sequence>
<organism>
    <name type="scientific">Saccharomyces cerevisiae (strain ATCC 204508 / S288c)</name>
    <name type="common">Baker's yeast</name>
    <dbReference type="NCBI Taxonomy" id="559292"/>
    <lineage>
        <taxon>Eukaryota</taxon>
        <taxon>Fungi</taxon>
        <taxon>Dikarya</taxon>
        <taxon>Ascomycota</taxon>
        <taxon>Saccharomycotina</taxon>
        <taxon>Saccharomycetes</taxon>
        <taxon>Saccharomycetales</taxon>
        <taxon>Saccharomycetaceae</taxon>
        <taxon>Saccharomyces</taxon>
    </lineage>
</organism>
<proteinExistence type="uncertain"/>
<protein>
    <recommendedName>
        <fullName>Putative uncharacterized protein YJR038C</fullName>
    </recommendedName>
</protein>
<keyword id="KW-0472">Membrane</keyword>
<keyword id="KW-0812">Transmembrane</keyword>
<keyword id="KW-1133">Transmembrane helix</keyword>
<reference key="1">
    <citation type="journal article" date="1995" name="Yeast">
        <title>Analysis of a 42.5 kb DNA sequence of chromosome X reveals three tRNA genes and 14 new open reading frames including a gene most probably belonging to the family of ubiquitin-protein ligases.</title>
        <authorList>
            <person name="Huang M.-E."/>
            <person name="Chuat J.-C."/>
            <person name="Galibert F."/>
        </authorList>
    </citation>
    <scope>NUCLEOTIDE SEQUENCE [GENOMIC DNA]</scope>
    <source>
        <strain>ATCC 204508 / S288c</strain>
    </source>
</reference>
<reference key="2">
    <citation type="journal article" date="1996" name="EMBO J.">
        <title>Complete nucleotide sequence of Saccharomyces cerevisiae chromosome X.</title>
        <authorList>
            <person name="Galibert F."/>
            <person name="Alexandraki D."/>
            <person name="Baur A."/>
            <person name="Boles E."/>
            <person name="Chalwatzis N."/>
            <person name="Chuat J.-C."/>
            <person name="Coster F."/>
            <person name="Cziepluch C."/>
            <person name="de Haan M."/>
            <person name="Domdey H."/>
            <person name="Durand P."/>
            <person name="Entian K.-D."/>
            <person name="Gatius M."/>
            <person name="Goffeau A."/>
            <person name="Grivell L.A."/>
            <person name="Hennemann A."/>
            <person name="Herbert C.J."/>
            <person name="Heumann K."/>
            <person name="Hilger F."/>
            <person name="Hollenberg C.P."/>
            <person name="Huang M.-E."/>
            <person name="Jacq C."/>
            <person name="Jauniaux J.-C."/>
            <person name="Katsoulou C."/>
            <person name="Kirchrath L."/>
            <person name="Kleine K."/>
            <person name="Kordes E."/>
            <person name="Koetter P."/>
            <person name="Liebl S."/>
            <person name="Louis E.J."/>
            <person name="Manus V."/>
            <person name="Mewes H.-W."/>
            <person name="Miosga T."/>
            <person name="Obermaier B."/>
            <person name="Perea J."/>
            <person name="Pohl T.M."/>
            <person name="Portetelle D."/>
            <person name="Pujol A."/>
            <person name="Purnelle B."/>
            <person name="Ramezani Rad M."/>
            <person name="Rasmussen S.W."/>
            <person name="Rose M."/>
            <person name="Rossau R."/>
            <person name="Schaaff-Gerstenschlaeger I."/>
            <person name="Smits P.H.M."/>
            <person name="Scarcez T."/>
            <person name="Soriano N."/>
            <person name="To Van D."/>
            <person name="Tzermia M."/>
            <person name="Van Broekhoven A."/>
            <person name="Vandenbol M."/>
            <person name="Wedler H."/>
            <person name="von Wettstein D."/>
            <person name="Wambutt R."/>
            <person name="Zagulski M."/>
            <person name="Zollner A."/>
            <person name="Karpfinger-Hartl L."/>
        </authorList>
    </citation>
    <scope>NUCLEOTIDE SEQUENCE [LARGE SCALE GENOMIC DNA]</scope>
    <source>
        <strain>ATCC 204508 / S288c</strain>
    </source>
</reference>
<reference key="3">
    <citation type="journal article" date="2014" name="G3 (Bethesda)">
        <title>The reference genome sequence of Saccharomyces cerevisiae: Then and now.</title>
        <authorList>
            <person name="Engel S.R."/>
            <person name="Dietrich F.S."/>
            <person name="Fisk D.G."/>
            <person name="Binkley G."/>
            <person name="Balakrishnan R."/>
            <person name="Costanzo M.C."/>
            <person name="Dwight S.S."/>
            <person name="Hitz B.C."/>
            <person name="Karra K."/>
            <person name="Nash R.S."/>
            <person name="Weng S."/>
            <person name="Wong E.D."/>
            <person name="Lloyd P."/>
            <person name="Skrzypek M.S."/>
            <person name="Miyasato S.R."/>
            <person name="Simison M."/>
            <person name="Cherry J.M."/>
        </authorList>
    </citation>
    <scope>GENOME REANNOTATION</scope>
    <source>
        <strain>ATCC 204508 / S288c</strain>
    </source>
</reference>